<reference key="1">
    <citation type="journal article" date="2005" name="Nature">
        <title>The genome sequence of the rice blast fungus Magnaporthe grisea.</title>
        <authorList>
            <person name="Dean R.A."/>
            <person name="Talbot N.J."/>
            <person name="Ebbole D.J."/>
            <person name="Farman M.L."/>
            <person name="Mitchell T.K."/>
            <person name="Orbach M.J."/>
            <person name="Thon M.R."/>
            <person name="Kulkarni R."/>
            <person name="Xu J.-R."/>
            <person name="Pan H."/>
            <person name="Read N.D."/>
            <person name="Lee Y.-H."/>
            <person name="Carbone I."/>
            <person name="Brown D."/>
            <person name="Oh Y.Y."/>
            <person name="Donofrio N."/>
            <person name="Jeong J.S."/>
            <person name="Soanes D.M."/>
            <person name="Djonovic S."/>
            <person name="Kolomiets E."/>
            <person name="Rehmeyer C."/>
            <person name="Li W."/>
            <person name="Harding M."/>
            <person name="Kim S."/>
            <person name="Lebrun M.-H."/>
            <person name="Bohnert H."/>
            <person name="Coughlan S."/>
            <person name="Butler J."/>
            <person name="Calvo S.E."/>
            <person name="Ma L.-J."/>
            <person name="Nicol R."/>
            <person name="Purcell S."/>
            <person name="Nusbaum C."/>
            <person name="Galagan J.E."/>
            <person name="Birren B.W."/>
        </authorList>
    </citation>
    <scope>NUCLEOTIDE SEQUENCE [LARGE SCALE GENOMIC DNA] (ISOFORMS 1 AND 2)</scope>
    <source>
        <strain>70-15 / ATCC MYA-4617 / FGSC 8958</strain>
    </source>
</reference>
<evidence type="ECO:0000250" key="1"/>
<evidence type="ECO:0000255" key="2"/>
<evidence type="ECO:0000256" key="3">
    <source>
        <dbReference type="SAM" id="MobiDB-lite"/>
    </source>
</evidence>
<evidence type="ECO:0000305" key="4"/>
<accession>A4R2R1</accession>
<accession>G4MRW7</accession>
<accession>G4MRW8</accession>
<proteinExistence type="inferred from homology"/>
<sequence length="1311" mass="143728">MKGNRRQPAVASQPTSPASPTPSKGTSKYANRDGSKIISVPKPSLSVETPQPSPTVSASMPPPTAGKGQPPSTAPTAPSGSNASGGEAAPTVNRKKAKRRAKLAAKAAAEAGLSGDNLSNGVAAHSASSSLPKQPSDAGHSDNEGEALSRPSQTNGHTSTGASKSKKGRKSKNEDGRFMDSAGSATGSNHHAEMRRPPSPIPHASPGRASGISKEKIWNTSSQEERQRIKEFWLGLGEEERKSLVKVEKDAVLKKMKEQQKQTCSCTVCGRKRTAIEEELEGLYDAYYEELESFANQPNPNGDVPPMLGPTGHFGSTAYTSQIMPSKYPPRQPSRGRIVEHCGDDEDDDGEDEYSEEELDDDEDYSDDEEPEEMHRQRPTEYQTDFFNFGNSLTVQGTRFHESLNSLPPYAKSYMEQVLKYVFRRDVDHSLGGILTVADDLLKNDGKKFIEMMEQLAERRMQREEDAKEQFARNYHINGNNYPAHAHPPPPEDDEEYEDEEEEEEYDSQDEEYDEEEVQTNPVHCACHCPCRGGDYGDAGMSASADDGSYQDHGQESHAKQHRHLQDSMTEEQRMEEGRRMFQIFAARMFEQRVLTAYREKVAKERQEKLLEELAQEDRETEKRKAKKQKEAQKRRDKALQKKQAQAEEKARKDAEKAAEEAERLAEEQRRQEEQRQKNEERKKKKEAQRKAEEEERQRKEAERLRRAQEQKERQAEQDRKAREAKEKEKKAKEEAKQREKAARELKEREARERKEKADKERLEKEAKIKAEKEAREAQRKAERASQKATTLANVPVPTGPARRQSQAPNPAPALPQSQQASVASPQLPTAVPALPKLPTPQKPRRTSQQEPFTSGFAAQQVHGQGAGQYPAPPKAATPVHTSPGPGGLLSKGSSSQGQSLHSQATSPLGTSLPTSTSLPTPFGMPHPPPNQHYPPGIGPLNAPPGLGGPRLFNDYPEQMYQQSPFGFRQATQQHPQLPPGLGIPMGPGRGLGHGPPPPPGLSAQQSDFPNMPASIFGSIPKEPSPLSSHSRQASANFDSPIAATPIARPTPIGRPGSVVQGRRGSSDSPGRPGQPGQDNLEEISAPHLGSSALLDDLDEPLMDDFMQDTRSARRSIPGPPQSSRFPPPAVGSFPMSNSPFGPSLWSQPGPSLVNQGFGGSFGQPAPPPGFNSLSDALSVNSPWTFASRPPPRHNLPQMRKVLIQACLDLASTKTPLLDEKAEDPSRRYLPITAVKKCVDTKFASGSTFTVDDLMSMTNTEGNANNGGGSFDTQEFDGELCVRWVPDDIGDSRTVGRSVGEIGSPIVGSRG</sequence>
<name>NST1_PYRO7</name>
<dbReference type="EMBL" id="CM001231">
    <property type="protein sequence ID" value="EHA56636.1"/>
    <property type="molecule type" value="Genomic_DNA"/>
</dbReference>
<dbReference type="EMBL" id="CM001231">
    <property type="protein sequence ID" value="EHA56637.1"/>
    <property type="molecule type" value="Genomic_DNA"/>
</dbReference>
<dbReference type="RefSeq" id="XP_003709248.1">
    <molecule id="A4R2R1-2"/>
    <property type="nucleotide sequence ID" value="XM_003709200.1"/>
</dbReference>
<dbReference type="RefSeq" id="XP_003709249.1">
    <molecule id="A4R2R1-1"/>
    <property type="nucleotide sequence ID" value="XM_003709201.1"/>
</dbReference>
<dbReference type="SMR" id="A4R2R1"/>
<dbReference type="EnsemblFungi" id="MGG_02456T0">
    <molecule id="A4R2R1-1"/>
    <property type="protein sequence ID" value="MGG_02456T0"/>
    <property type="gene ID" value="MGG_02456"/>
</dbReference>
<dbReference type="EnsemblFungi" id="MGG_02456T1">
    <molecule id="A4R2R1-2"/>
    <property type="protein sequence ID" value="MGG_02456T1"/>
    <property type="gene ID" value="MGG_02456"/>
</dbReference>
<dbReference type="GeneID" id="2681553"/>
<dbReference type="KEGG" id="mgr:MGG_02456"/>
<dbReference type="VEuPathDB" id="FungiDB:MGG_02456"/>
<dbReference type="eggNOG" id="ENOG502QSSK">
    <property type="taxonomic scope" value="Eukaryota"/>
</dbReference>
<dbReference type="InParanoid" id="A4R2R1"/>
<dbReference type="OrthoDB" id="21629at2759"/>
<dbReference type="Proteomes" id="UP000009058">
    <property type="component" value="Chromosome 1"/>
</dbReference>
<dbReference type="GO" id="GO:0005737">
    <property type="term" value="C:cytoplasm"/>
    <property type="evidence" value="ECO:0007669"/>
    <property type="project" value="UniProtKB-SubCell"/>
</dbReference>
<dbReference type="CDD" id="cd06503">
    <property type="entry name" value="ATP-synt_Fo_b"/>
    <property type="match status" value="1"/>
</dbReference>
<dbReference type="InterPro" id="IPR051195">
    <property type="entry name" value="Fungal_stress_NST1"/>
</dbReference>
<dbReference type="InterPro" id="IPR025279">
    <property type="entry name" value="NST1"/>
</dbReference>
<dbReference type="PANTHER" id="PTHR31780:SF10">
    <property type="entry name" value="LD36051P"/>
    <property type="match status" value="1"/>
</dbReference>
<dbReference type="PANTHER" id="PTHR31780">
    <property type="entry name" value="STRESS RESPONSE PROTEIN NST1-RELATED"/>
    <property type="match status" value="1"/>
</dbReference>
<dbReference type="Pfam" id="PF13945">
    <property type="entry name" value="NST1"/>
    <property type="match status" value="1"/>
</dbReference>
<organism>
    <name type="scientific">Pyricularia oryzae (strain 70-15 / ATCC MYA-4617 / FGSC 8958)</name>
    <name type="common">Rice blast fungus</name>
    <name type="synonym">Magnaporthe oryzae</name>
    <dbReference type="NCBI Taxonomy" id="242507"/>
    <lineage>
        <taxon>Eukaryota</taxon>
        <taxon>Fungi</taxon>
        <taxon>Dikarya</taxon>
        <taxon>Ascomycota</taxon>
        <taxon>Pezizomycotina</taxon>
        <taxon>Sordariomycetes</taxon>
        <taxon>Sordariomycetidae</taxon>
        <taxon>Magnaporthales</taxon>
        <taxon>Pyriculariaceae</taxon>
        <taxon>Pyricularia</taxon>
    </lineage>
</organism>
<comment type="function">
    <text evidence="1">May act as a negative regulator of salt tolerance.</text>
</comment>
<comment type="subcellular location">
    <subcellularLocation>
        <location evidence="1">Cytoplasm</location>
    </subcellularLocation>
</comment>
<comment type="alternative products">
    <event type="alternative splicing"/>
    <isoform>
        <id>A4R2R1-1</id>
        <name>1</name>
        <sequence type="displayed"/>
    </isoform>
    <isoform>
        <id>A4R2R1-2</id>
        <name>2</name>
        <sequence type="described" ref="VSP_042192 VSP_042193"/>
    </isoform>
</comment>
<comment type="similarity">
    <text evidence="4">Belongs to the NST1 family.</text>
</comment>
<protein>
    <recommendedName>
        <fullName>Stress response protein NST1</fullName>
    </recommendedName>
</protein>
<feature type="chain" id="PRO_0000324453" description="Stress response protein NST1">
    <location>
        <begin position="1"/>
        <end position="1311"/>
    </location>
</feature>
<feature type="region of interest" description="Disordered" evidence="3">
    <location>
        <begin position="1"/>
        <end position="226"/>
    </location>
</feature>
<feature type="region of interest" description="Disordered" evidence="3">
    <location>
        <begin position="308"/>
        <end position="379"/>
    </location>
</feature>
<feature type="region of interest" description="Disordered" evidence="3">
    <location>
        <begin position="478"/>
        <end position="521"/>
    </location>
</feature>
<feature type="region of interest" description="Disordered" evidence="3">
    <location>
        <begin position="542"/>
        <end position="576"/>
    </location>
</feature>
<feature type="region of interest" description="Disordered" evidence="3">
    <location>
        <begin position="613"/>
        <end position="1083"/>
    </location>
</feature>
<feature type="coiled-coil region" evidence="2">
    <location>
        <begin position="450"/>
        <end position="521"/>
    </location>
</feature>
<feature type="coiled-coil region" evidence="2">
    <location>
        <begin position="599"/>
        <end position="795"/>
    </location>
</feature>
<feature type="compositionally biased region" description="Low complexity" evidence="3">
    <location>
        <begin position="8"/>
        <end position="27"/>
    </location>
</feature>
<feature type="compositionally biased region" description="Polar residues" evidence="3">
    <location>
        <begin position="46"/>
        <end position="58"/>
    </location>
</feature>
<feature type="compositionally biased region" description="Low complexity" evidence="3">
    <location>
        <begin position="68"/>
        <end position="86"/>
    </location>
</feature>
<feature type="compositionally biased region" description="Basic residues" evidence="3">
    <location>
        <begin position="93"/>
        <end position="103"/>
    </location>
</feature>
<feature type="compositionally biased region" description="Polar residues" evidence="3">
    <location>
        <begin position="116"/>
        <end position="133"/>
    </location>
</feature>
<feature type="compositionally biased region" description="Basic and acidic residues" evidence="3">
    <location>
        <begin position="213"/>
        <end position="226"/>
    </location>
</feature>
<feature type="compositionally biased region" description="Acidic residues" evidence="3">
    <location>
        <begin position="343"/>
        <end position="372"/>
    </location>
</feature>
<feature type="compositionally biased region" description="Acidic residues" evidence="3">
    <location>
        <begin position="491"/>
        <end position="518"/>
    </location>
</feature>
<feature type="compositionally biased region" description="Basic and acidic residues" evidence="3">
    <location>
        <begin position="613"/>
        <end position="682"/>
    </location>
</feature>
<feature type="compositionally biased region" description="Basic and acidic residues" evidence="3">
    <location>
        <begin position="689"/>
        <end position="786"/>
    </location>
</feature>
<feature type="compositionally biased region" description="Low complexity" evidence="3">
    <location>
        <begin position="805"/>
        <end position="829"/>
    </location>
</feature>
<feature type="compositionally biased region" description="Low complexity" evidence="3">
    <location>
        <begin position="891"/>
        <end position="922"/>
    </location>
</feature>
<feature type="compositionally biased region" description="Pro residues" evidence="3">
    <location>
        <begin position="923"/>
        <end position="933"/>
    </location>
</feature>
<feature type="compositionally biased region" description="Low complexity" evidence="3">
    <location>
        <begin position="934"/>
        <end position="945"/>
    </location>
</feature>
<feature type="compositionally biased region" description="Polar residues" evidence="3">
    <location>
        <begin position="960"/>
        <end position="975"/>
    </location>
</feature>
<feature type="compositionally biased region" description="Gly residues" evidence="3">
    <location>
        <begin position="984"/>
        <end position="994"/>
    </location>
</feature>
<feature type="compositionally biased region" description="Polar residues" evidence="3">
    <location>
        <begin position="1026"/>
        <end position="1038"/>
    </location>
</feature>
<feature type="compositionally biased region" description="Low complexity" evidence="3">
    <location>
        <begin position="1041"/>
        <end position="1052"/>
    </location>
</feature>
<feature type="splice variant" id="VSP_042192" description="In isoform 2." evidence="4">
    <location>
        <begin position="398"/>
        <end position="432"/>
    </location>
</feature>
<feature type="splice variant" id="VSP_042193" description="In isoform 2." evidence="4">
    <location>
        <begin position="518"/>
        <end position="566"/>
    </location>
</feature>
<gene>
    <name type="primary">NST1</name>
    <name type="ORF">MGG_02456</name>
</gene>
<keyword id="KW-0025">Alternative splicing</keyword>
<keyword id="KW-0175">Coiled coil</keyword>
<keyword id="KW-0963">Cytoplasm</keyword>
<keyword id="KW-1185">Reference proteome</keyword>
<keyword id="KW-0346">Stress response</keyword>